<gene>
    <name evidence="12" type="primary">mekA</name>
    <name evidence="8 9" type="synonym">MEK1</name>
    <name type="ORF">DDB_G0269152</name>
</gene>
<name>MP2K1_DICDI</name>
<accession>Q55CL6</accession>
<accession>O00885</accession>
<comment type="function">
    <text evidence="6 7">Required for cAMP-mediated activation of guanylyl cyclase activity and plays an essential role in aggregation, morphogenesis, and chemotaxis. Appears to act upstream of erk1 but not erk2.</text>
</comment>
<comment type="catalytic activity">
    <reaction evidence="2">
        <text>L-seryl-[protein] + ATP = O-phospho-L-seryl-[protein] + ADP + H(+)</text>
        <dbReference type="Rhea" id="RHEA:17989"/>
        <dbReference type="Rhea" id="RHEA-COMP:9863"/>
        <dbReference type="Rhea" id="RHEA-COMP:11604"/>
        <dbReference type="ChEBI" id="CHEBI:15378"/>
        <dbReference type="ChEBI" id="CHEBI:29999"/>
        <dbReference type="ChEBI" id="CHEBI:30616"/>
        <dbReference type="ChEBI" id="CHEBI:83421"/>
        <dbReference type="ChEBI" id="CHEBI:456216"/>
        <dbReference type="EC" id="2.7.12.2"/>
    </reaction>
</comment>
<comment type="catalytic activity">
    <reaction evidence="2">
        <text>L-threonyl-[protein] + ATP = O-phospho-L-threonyl-[protein] + ADP + H(+)</text>
        <dbReference type="Rhea" id="RHEA:46608"/>
        <dbReference type="Rhea" id="RHEA-COMP:11060"/>
        <dbReference type="Rhea" id="RHEA-COMP:11605"/>
        <dbReference type="ChEBI" id="CHEBI:15378"/>
        <dbReference type="ChEBI" id="CHEBI:30013"/>
        <dbReference type="ChEBI" id="CHEBI:30616"/>
        <dbReference type="ChEBI" id="CHEBI:61977"/>
        <dbReference type="ChEBI" id="CHEBI:456216"/>
        <dbReference type="EC" id="2.7.12.2"/>
    </reaction>
</comment>
<comment type="catalytic activity">
    <reaction evidence="2">
        <text>L-tyrosyl-[protein] + ATP = O-phospho-L-tyrosyl-[protein] + ADP + H(+)</text>
        <dbReference type="Rhea" id="RHEA:10596"/>
        <dbReference type="Rhea" id="RHEA-COMP:10136"/>
        <dbReference type="Rhea" id="RHEA-COMP:20101"/>
        <dbReference type="ChEBI" id="CHEBI:15378"/>
        <dbReference type="ChEBI" id="CHEBI:30616"/>
        <dbReference type="ChEBI" id="CHEBI:46858"/>
        <dbReference type="ChEBI" id="CHEBI:61978"/>
        <dbReference type="ChEBI" id="CHEBI:456216"/>
        <dbReference type="EC" id="2.7.12.2"/>
    </reaction>
</comment>
<comment type="cofactor">
    <cofactor evidence="2">
        <name>Mg(2+)</name>
        <dbReference type="ChEBI" id="CHEBI:18420"/>
    </cofactor>
</comment>
<comment type="subunit">
    <text evidence="6">Interacts with mip1.</text>
</comment>
<comment type="subcellular location">
    <subcellularLocation>
        <location evidence="6">Cytoplasm</location>
    </subcellularLocation>
    <subcellularLocation>
        <location evidence="6">Nucleus</location>
    </subcellularLocation>
    <text evidence="6">Predominantly nuclear in vegetatively growing cells. Translocates to the cell cortex in response to chemoattractant stimulation and is present at the leading edge of chemotaxing cells.</text>
</comment>
<comment type="PTM">
    <text evidence="6">Sumoylated and ubiquitinated in response to chemoattractant stimulation. Sumoylation is linked to kinase activation and results in translocation.</text>
</comment>
<comment type="disruption phenotype">
    <text evidence="7">Cells are unable to undergo chemotaxis properly during aggregation in response to the chemoattractant cAMP or activate guanylyl cyclase. Form extremely small aggregates resulting in the development of slugs and terminal fruiting bodies that are significantly smaller than those of wild-type cells. Transfer of the temperature-sensitive mutants from a temperature of 18 degrees Celsius to 27 degrees Celsius causes forming aggregates to split into multiple small aggregates.</text>
</comment>
<comment type="similarity">
    <text evidence="2">Belongs to the protein kinase superfamily. STE Ser/Thr protein kinase family. MAP kinase kinase subfamily.</text>
</comment>
<organism>
    <name type="scientific">Dictyostelium discoideum</name>
    <name type="common">Social amoeba</name>
    <dbReference type="NCBI Taxonomy" id="44689"/>
    <lineage>
        <taxon>Eukaryota</taxon>
        <taxon>Amoebozoa</taxon>
        <taxon>Evosea</taxon>
        <taxon>Eumycetozoa</taxon>
        <taxon>Dictyostelia</taxon>
        <taxon>Dictyosteliales</taxon>
        <taxon>Dictyosteliaceae</taxon>
        <taxon>Dictyostelium</taxon>
    </lineage>
</organism>
<protein>
    <recommendedName>
        <fullName evidence="8 9">Dual specificity mitogen-activated protein kinase kinase 1</fullName>
        <shortName evidence="8 9">MAP kinase kinase 1</shortName>
        <shortName evidence="8 9">MAPKK 1</shortName>
        <ecNumber evidence="2">2.7.12.2</ecNumber>
    </recommendedName>
    <alternativeName>
        <fullName evidence="8 9">ERK activator kinase 1</fullName>
    </alternativeName>
    <alternativeName>
        <fullName evidence="8 9">MAPK/ERK kinase 1</fullName>
        <shortName evidence="8 9">DdMEK1</shortName>
        <shortName evidence="8 9">MEK1</shortName>
    </alternativeName>
    <alternativeName>
        <fullName evidence="12">MAPK/ERK kinase A</fullName>
        <shortName evidence="12">MEKA</shortName>
    </alternativeName>
</protein>
<evidence type="ECO:0000250" key="1">
    <source>
        <dbReference type="UniProtKB" id="P28523"/>
    </source>
</evidence>
<evidence type="ECO:0000250" key="2">
    <source>
        <dbReference type="UniProtKB" id="Q869N2"/>
    </source>
</evidence>
<evidence type="ECO:0000255" key="3">
    <source>
        <dbReference type="PROSITE-ProRule" id="PRU00159"/>
    </source>
</evidence>
<evidence type="ECO:0000255" key="4">
    <source>
        <dbReference type="PROSITE-ProRule" id="PRU10027"/>
    </source>
</evidence>
<evidence type="ECO:0000256" key="5">
    <source>
        <dbReference type="SAM" id="MobiDB-lite"/>
    </source>
</evidence>
<evidence type="ECO:0000269" key="6">
    <source>
    </source>
</evidence>
<evidence type="ECO:0000269" key="7">
    <source>
    </source>
</evidence>
<evidence type="ECO:0000303" key="8">
    <source>
    </source>
</evidence>
<evidence type="ECO:0000303" key="9">
    <source>
    </source>
</evidence>
<evidence type="ECO:0000305" key="10"/>
<evidence type="ECO:0000312" key="11">
    <source>
        <dbReference type="EMBL" id="AAB58577.1"/>
    </source>
</evidence>
<evidence type="ECO:0000312" key="12">
    <source>
        <dbReference type="EMBL" id="EAL71926.1"/>
    </source>
</evidence>
<proteinExistence type="evidence at protein level"/>
<keyword id="KW-0067">ATP-binding</keyword>
<keyword id="KW-0145">Chemotaxis</keyword>
<keyword id="KW-0963">Cytoplasm</keyword>
<keyword id="KW-1017">Isopeptide bond</keyword>
<keyword id="KW-0418">Kinase</keyword>
<keyword id="KW-0460">Magnesium</keyword>
<keyword id="KW-0479">Metal-binding</keyword>
<keyword id="KW-0547">Nucleotide-binding</keyword>
<keyword id="KW-0539">Nucleus</keyword>
<keyword id="KW-1185">Reference proteome</keyword>
<keyword id="KW-0723">Serine/threonine-protein kinase</keyword>
<keyword id="KW-0808">Transferase</keyword>
<keyword id="KW-0832">Ubl conjugation</keyword>
<dbReference type="EC" id="2.7.12.2" evidence="2"/>
<dbReference type="EMBL" id="U87912">
    <property type="protein sequence ID" value="AAB58577.1"/>
    <property type="molecule type" value="mRNA"/>
</dbReference>
<dbReference type="EMBL" id="AAFI02000005">
    <property type="protein sequence ID" value="EAL71926.1"/>
    <property type="molecule type" value="Genomic_DNA"/>
</dbReference>
<dbReference type="RefSeq" id="XP_646465.1">
    <property type="nucleotide sequence ID" value="XM_641373.1"/>
</dbReference>
<dbReference type="SMR" id="Q55CL6"/>
<dbReference type="FunCoup" id="Q55CL6">
    <property type="interactions" value="259"/>
</dbReference>
<dbReference type="STRING" id="44689.Q55CL6"/>
<dbReference type="PaxDb" id="44689-DDB0191164"/>
<dbReference type="EnsemblProtists" id="EAL71926">
    <property type="protein sequence ID" value="EAL71926"/>
    <property type="gene ID" value="DDB_G0269152"/>
</dbReference>
<dbReference type="GeneID" id="8617426"/>
<dbReference type="KEGG" id="ddi:DDB_G0269152"/>
<dbReference type="dictyBase" id="DDB_G0269152">
    <property type="gene designation" value="mekA"/>
</dbReference>
<dbReference type="VEuPathDB" id="AmoebaDB:DDB_G0269152"/>
<dbReference type="eggNOG" id="KOG0581">
    <property type="taxonomic scope" value="Eukaryota"/>
</dbReference>
<dbReference type="HOGENOM" id="CLU_415880_0_0_1"/>
<dbReference type="InParanoid" id="Q55CL6"/>
<dbReference type="OMA" id="LECAIGK"/>
<dbReference type="PhylomeDB" id="Q55CL6"/>
<dbReference type="PRO" id="PR:Q55CL6"/>
<dbReference type="Proteomes" id="UP000002195">
    <property type="component" value="Chromosome 1"/>
</dbReference>
<dbReference type="GO" id="GO:0005938">
    <property type="term" value="C:cell cortex"/>
    <property type="evidence" value="ECO:0000314"/>
    <property type="project" value="dictyBase"/>
</dbReference>
<dbReference type="GO" id="GO:0031252">
    <property type="term" value="C:cell leading edge"/>
    <property type="evidence" value="ECO:0000314"/>
    <property type="project" value="dictyBase"/>
</dbReference>
<dbReference type="GO" id="GO:0005737">
    <property type="term" value="C:cytoplasm"/>
    <property type="evidence" value="ECO:0000318"/>
    <property type="project" value="GO_Central"/>
</dbReference>
<dbReference type="GO" id="GO:0005829">
    <property type="term" value="C:cytosol"/>
    <property type="evidence" value="ECO:0000314"/>
    <property type="project" value="dictyBase"/>
</dbReference>
<dbReference type="GO" id="GO:0016020">
    <property type="term" value="C:membrane"/>
    <property type="evidence" value="ECO:0000304"/>
    <property type="project" value="dictyBase"/>
</dbReference>
<dbReference type="GO" id="GO:0005634">
    <property type="term" value="C:nucleus"/>
    <property type="evidence" value="ECO:0000314"/>
    <property type="project" value="dictyBase"/>
</dbReference>
<dbReference type="GO" id="GO:0005524">
    <property type="term" value="F:ATP binding"/>
    <property type="evidence" value="ECO:0007669"/>
    <property type="project" value="UniProtKB-KW"/>
</dbReference>
<dbReference type="GO" id="GO:0004708">
    <property type="term" value="F:MAP kinase kinase activity"/>
    <property type="evidence" value="ECO:0000304"/>
    <property type="project" value="dictyBase"/>
</dbReference>
<dbReference type="GO" id="GO:0046872">
    <property type="term" value="F:metal ion binding"/>
    <property type="evidence" value="ECO:0007669"/>
    <property type="project" value="UniProtKB-KW"/>
</dbReference>
<dbReference type="GO" id="GO:0019887">
    <property type="term" value="F:protein kinase regulator activity"/>
    <property type="evidence" value="ECO:0000315"/>
    <property type="project" value="dictyBase"/>
</dbReference>
<dbReference type="GO" id="GO:0106310">
    <property type="term" value="F:protein serine kinase activity"/>
    <property type="evidence" value="ECO:0007669"/>
    <property type="project" value="RHEA"/>
</dbReference>
<dbReference type="GO" id="GO:0004674">
    <property type="term" value="F:protein serine/threonine kinase activity"/>
    <property type="evidence" value="ECO:0007669"/>
    <property type="project" value="UniProtKB-KW"/>
</dbReference>
<dbReference type="GO" id="GO:0004713">
    <property type="term" value="F:protein tyrosine kinase activity"/>
    <property type="evidence" value="ECO:0007669"/>
    <property type="project" value="RHEA"/>
</dbReference>
<dbReference type="GO" id="GO:0043130">
    <property type="term" value="F:ubiquitin binding"/>
    <property type="evidence" value="ECO:0000353"/>
    <property type="project" value="dictyBase"/>
</dbReference>
<dbReference type="GO" id="GO:0031152">
    <property type="term" value="P:aggregation involved in sorocarp development"/>
    <property type="evidence" value="ECO:0000304"/>
    <property type="project" value="dictyBase"/>
</dbReference>
<dbReference type="GO" id="GO:0043327">
    <property type="term" value="P:chemotaxis to cAMP"/>
    <property type="evidence" value="ECO:0000315"/>
    <property type="project" value="dictyBase"/>
</dbReference>
<dbReference type="GO" id="GO:0000165">
    <property type="term" value="P:MAPK cascade"/>
    <property type="evidence" value="ECO:0000315"/>
    <property type="project" value="dictyBase"/>
</dbReference>
<dbReference type="GO" id="GO:0072697">
    <property type="term" value="P:protein localization to cell cortex"/>
    <property type="evidence" value="ECO:0000314"/>
    <property type="project" value="dictyBase"/>
</dbReference>
<dbReference type="GO" id="GO:0030587">
    <property type="term" value="P:sorocarp development"/>
    <property type="evidence" value="ECO:0007001"/>
    <property type="project" value="dictyBase"/>
</dbReference>
<dbReference type="CDD" id="cd06623">
    <property type="entry name" value="PKc_MAPKK_plant_like"/>
    <property type="match status" value="1"/>
</dbReference>
<dbReference type="FunFam" id="3.30.200.20:FF:000716">
    <property type="entry name" value="Mitogen-activated protein kinase kinase 1"/>
    <property type="match status" value="1"/>
</dbReference>
<dbReference type="FunFam" id="1.10.510.10:FF:000432">
    <property type="entry name" value="mitogen-activated protein kinase kinase 3"/>
    <property type="match status" value="1"/>
</dbReference>
<dbReference type="Gene3D" id="3.30.200.20">
    <property type="entry name" value="Phosphorylase Kinase, domain 1"/>
    <property type="match status" value="1"/>
</dbReference>
<dbReference type="Gene3D" id="1.10.510.10">
    <property type="entry name" value="Transferase(Phosphotransferase) domain 1"/>
    <property type="match status" value="1"/>
</dbReference>
<dbReference type="InterPro" id="IPR011009">
    <property type="entry name" value="Kinase-like_dom_sf"/>
</dbReference>
<dbReference type="InterPro" id="IPR000719">
    <property type="entry name" value="Prot_kinase_dom"/>
</dbReference>
<dbReference type="InterPro" id="IPR017441">
    <property type="entry name" value="Protein_kinase_ATP_BS"/>
</dbReference>
<dbReference type="InterPro" id="IPR008271">
    <property type="entry name" value="Ser/Thr_kinase_AS"/>
</dbReference>
<dbReference type="PANTHER" id="PTHR48013:SF9">
    <property type="entry name" value="DUAL SPECIFICITY MITOGEN-ACTIVATED PROTEIN KINASE KINASE 5"/>
    <property type="match status" value="1"/>
</dbReference>
<dbReference type="PANTHER" id="PTHR48013">
    <property type="entry name" value="DUAL SPECIFICITY MITOGEN-ACTIVATED PROTEIN KINASE KINASE 5-RELATED"/>
    <property type="match status" value="1"/>
</dbReference>
<dbReference type="Pfam" id="PF00069">
    <property type="entry name" value="Pkinase"/>
    <property type="match status" value="1"/>
</dbReference>
<dbReference type="SMART" id="SM00220">
    <property type="entry name" value="S_TKc"/>
    <property type="match status" value="1"/>
</dbReference>
<dbReference type="SUPFAM" id="SSF56112">
    <property type="entry name" value="Protein kinase-like (PK-like)"/>
    <property type="match status" value="1"/>
</dbReference>
<dbReference type="PROSITE" id="PS00107">
    <property type="entry name" value="PROTEIN_KINASE_ATP"/>
    <property type="match status" value="1"/>
</dbReference>
<dbReference type="PROSITE" id="PS50011">
    <property type="entry name" value="PROTEIN_KINASE_DOM"/>
    <property type="match status" value="1"/>
</dbReference>
<dbReference type="PROSITE" id="PS00108">
    <property type="entry name" value="PROTEIN_KINASE_ST"/>
    <property type="match status" value="1"/>
</dbReference>
<sequence>MNTNTNTNTNISSSGNNIINTPTTNNNNKNNNNNNNNNNNSNNSNNNSSNNNNNNNNAVGVKTGKKVNLKVETPVQNNENSYSLTTSGTFKEGDLLINKKGLLIKGESPKNSSVNDRNKNKSLHSNLNPQLLASPTSSESMDFNQGFYNNNNNNNNNNNNNNLNNFNNLMNNGIDSPQLSGISISTPTSSHSFNNTFTNYYNNNNNYNNYNNNNNSNNNNNNYNNSNNNFNNFNNYNNYGNNNNFNNFNALQSSSNSSFDISSSGSSNNYLNNSANNHPHYDTNLSYDLKDLKIIRVLGRGAGGVVKLAYHETSGTYIALKVITLDIQENIRKQIILELKTLHKTSYPYIVSFYDAFYTEGSIFIALEFMELGSLSDIMKKTSTIPEPVLGKIAFQVLQGLVYLHRKLHLIHRDIKPSNILVNNKGEAKIADFGVSGQLQHTLSKAVTWVGTVTYMSPERISGRSYSFDSEIWSLGLTILECAIGKFPYGSNLPHQQQQPLQQQQQQQQQQQQPLQQQQQQQQQQQQPLQLQLQNLDINNSNNNIRNSNNNNNNNNNNNNNNNNNNNNNVLDISNGGLVDSGSSVPEGMGFWVLLDCIVKEEVPILPSTFSKEFRSFISECLQKEPTERPTASNLLNHEFVKKYQNFNVEKWTANLKQQQ</sequence>
<reference evidence="10 11" key="1">
    <citation type="journal article" date="1997" name="EMBO J.">
        <title>The Dictyostelium MAP kinase kinase DdMEK1 regulates chemotaxis and is essential for chemoattractant-mediated activation of guanylyl cyclase.</title>
        <authorList>
            <person name="Ma H."/>
            <person name="Gamper M."/>
            <person name="Parent C."/>
            <person name="Firtel R.A."/>
        </authorList>
    </citation>
    <scope>NUCLEOTIDE SEQUENCE [MRNA]</scope>
    <scope>FUNCTION</scope>
    <scope>DISRUPTION PHENOTYPE</scope>
    <scope>MUTAGENESIS OF LYS-321; SER-444; THR-448 AND PRO-458</scope>
    <source>
        <strain evidence="11">AX3-1</strain>
    </source>
</reference>
<reference evidence="12" key="2">
    <citation type="journal article" date="2005" name="Nature">
        <title>The genome of the social amoeba Dictyostelium discoideum.</title>
        <authorList>
            <person name="Eichinger L."/>
            <person name="Pachebat J.A."/>
            <person name="Gloeckner G."/>
            <person name="Rajandream M.A."/>
            <person name="Sucgang R."/>
            <person name="Berriman M."/>
            <person name="Song J."/>
            <person name="Olsen R."/>
            <person name="Szafranski K."/>
            <person name="Xu Q."/>
            <person name="Tunggal B."/>
            <person name="Kummerfeld S."/>
            <person name="Madera M."/>
            <person name="Konfortov B.A."/>
            <person name="Rivero F."/>
            <person name="Bankier A.T."/>
            <person name="Lehmann R."/>
            <person name="Hamlin N."/>
            <person name="Davies R."/>
            <person name="Gaudet P."/>
            <person name="Fey P."/>
            <person name="Pilcher K."/>
            <person name="Chen G."/>
            <person name="Saunders D."/>
            <person name="Sodergren E.J."/>
            <person name="Davis P."/>
            <person name="Kerhornou A."/>
            <person name="Nie X."/>
            <person name="Hall N."/>
            <person name="Anjard C."/>
            <person name="Hemphill L."/>
            <person name="Bason N."/>
            <person name="Farbrother P."/>
            <person name="Desany B."/>
            <person name="Just E."/>
            <person name="Morio T."/>
            <person name="Rost R."/>
            <person name="Churcher C.M."/>
            <person name="Cooper J."/>
            <person name="Haydock S."/>
            <person name="van Driessche N."/>
            <person name="Cronin A."/>
            <person name="Goodhead I."/>
            <person name="Muzny D.M."/>
            <person name="Mourier T."/>
            <person name="Pain A."/>
            <person name="Lu M."/>
            <person name="Harper D."/>
            <person name="Lindsay R."/>
            <person name="Hauser H."/>
            <person name="James K.D."/>
            <person name="Quiles M."/>
            <person name="Madan Babu M."/>
            <person name="Saito T."/>
            <person name="Buchrieser C."/>
            <person name="Wardroper A."/>
            <person name="Felder M."/>
            <person name="Thangavelu M."/>
            <person name="Johnson D."/>
            <person name="Knights A."/>
            <person name="Loulseged H."/>
            <person name="Mungall K.L."/>
            <person name="Oliver K."/>
            <person name="Price C."/>
            <person name="Quail M.A."/>
            <person name="Urushihara H."/>
            <person name="Hernandez J."/>
            <person name="Rabbinowitsch E."/>
            <person name="Steffen D."/>
            <person name="Sanders M."/>
            <person name="Ma J."/>
            <person name="Kohara Y."/>
            <person name="Sharp S."/>
            <person name="Simmonds M.N."/>
            <person name="Spiegler S."/>
            <person name="Tivey A."/>
            <person name="Sugano S."/>
            <person name="White B."/>
            <person name="Walker D."/>
            <person name="Woodward J.R."/>
            <person name="Winckler T."/>
            <person name="Tanaka Y."/>
            <person name="Shaulsky G."/>
            <person name="Schleicher M."/>
            <person name="Weinstock G.M."/>
            <person name="Rosenthal A."/>
            <person name="Cox E.C."/>
            <person name="Chisholm R.L."/>
            <person name="Gibbs R.A."/>
            <person name="Loomis W.F."/>
            <person name="Platzer M."/>
            <person name="Kay R.R."/>
            <person name="Williams J.G."/>
            <person name="Dear P.H."/>
            <person name="Noegel A.A."/>
            <person name="Barrell B.G."/>
            <person name="Kuspa A."/>
        </authorList>
    </citation>
    <scope>NUCLEOTIDE SEQUENCE [LARGE SCALE GENOMIC DNA]</scope>
    <source>
        <strain evidence="12">AX4</strain>
    </source>
</reference>
<reference evidence="10" key="3">
    <citation type="journal article" date="2002" name="Dev. Cell">
        <title>Regulated SUMOylation and ubiquitination of DdMEK1 is required for proper chemotaxis.</title>
        <authorList>
            <person name="Sobko A."/>
            <person name="Ma H."/>
            <person name="Firtel R.A."/>
        </authorList>
    </citation>
    <scope>FUNCTION</scope>
    <scope>INTERACTION WITH MIP1</scope>
    <scope>SUBCELLULAR LOCATION</scope>
    <scope>SUMOYLATION AT LYS-105</scope>
    <scope>UBIQUITINATION</scope>
    <scope>MUTAGENESIS OF LYS-105; SER-444 AND THR-448</scope>
</reference>
<feature type="chain" id="PRO_0000371251" description="Dual specificity mitogen-activated protein kinase kinase 1">
    <location>
        <begin position="1"/>
        <end position="660"/>
    </location>
</feature>
<feature type="domain" description="Protein kinase" evidence="3">
    <location>
        <begin position="292"/>
        <end position="641"/>
    </location>
</feature>
<feature type="region of interest" description="Disordered" evidence="5">
    <location>
        <begin position="1"/>
        <end position="60"/>
    </location>
</feature>
<feature type="region of interest" description="Disordered" evidence="5">
    <location>
        <begin position="105"/>
        <end position="169"/>
    </location>
</feature>
<feature type="region of interest" description="Disordered" evidence="5">
    <location>
        <begin position="204"/>
        <end position="229"/>
    </location>
</feature>
<feature type="region of interest" description="Disordered" evidence="5">
    <location>
        <begin position="491"/>
        <end position="510"/>
    </location>
</feature>
<feature type="region of interest" description="Disordered" evidence="5">
    <location>
        <begin position="539"/>
        <end position="573"/>
    </location>
</feature>
<feature type="compositionally biased region" description="Low complexity" evidence="5">
    <location>
        <begin position="1"/>
        <end position="57"/>
    </location>
</feature>
<feature type="compositionally biased region" description="Polar residues" evidence="5">
    <location>
        <begin position="123"/>
        <end position="148"/>
    </location>
</feature>
<feature type="compositionally biased region" description="Low complexity" evidence="5">
    <location>
        <begin position="149"/>
        <end position="169"/>
    </location>
</feature>
<feature type="compositionally biased region" description="Low complexity" evidence="5">
    <location>
        <begin position="496"/>
        <end position="510"/>
    </location>
</feature>
<feature type="compositionally biased region" description="Low complexity" evidence="5">
    <location>
        <begin position="539"/>
        <end position="569"/>
    </location>
</feature>
<feature type="active site" description="Proton acceptor" evidence="1 3 4">
    <location>
        <position position="414"/>
    </location>
</feature>
<feature type="binding site" evidence="1 3">
    <location>
        <begin position="298"/>
        <end position="306"/>
    </location>
    <ligand>
        <name>ATP</name>
        <dbReference type="ChEBI" id="CHEBI:30616"/>
    </ligand>
</feature>
<feature type="binding site" evidence="1 3">
    <location>
        <position position="321"/>
    </location>
    <ligand>
        <name>ATP</name>
        <dbReference type="ChEBI" id="CHEBI:30616"/>
    </ligand>
</feature>
<feature type="cross-link" description="Glycyl lysine isopeptide (Lys-Gly) (interchain with G-Cter in SUMO)" evidence="6">
    <location>
        <position position="105"/>
    </location>
</feature>
<feature type="mutagenesis site" description="Loss of sumoylation, and translocation ability." evidence="6">
    <original>K</original>
    <variation>R</variation>
    <location>
        <position position="105"/>
    </location>
</feature>
<feature type="mutagenesis site" description="Loss of aggregation ability." evidence="7">
    <original>K</original>
    <variation>A</variation>
    <location>
        <position position="321"/>
    </location>
</feature>
<feature type="mutagenesis site" description="Loss of aggregation ability, sumoylation and translocation; when associated with A-448." evidence="6 7">
    <original>S</original>
    <variation>A</variation>
    <location>
        <position position="444"/>
    </location>
</feature>
<feature type="mutagenesis site" description="Loss of aggregation ability and defects in cAMP-mediated signaling pathways; when associated with D-448." evidence="6 7">
    <original>S</original>
    <variation>D</variation>
    <location>
        <position position="444"/>
    </location>
</feature>
<feature type="mutagenesis site" description="Constitutively sumoylated and cytosolic; when associated with E-448." evidence="6 7">
    <original>S</original>
    <variation>E</variation>
    <location>
        <position position="444"/>
    </location>
</feature>
<feature type="mutagenesis site" description="Loss of aggregation ability, sumoylation and translocation; when associated with A-444." evidence="6 7">
    <original>T</original>
    <variation>A</variation>
    <location>
        <position position="448"/>
    </location>
</feature>
<feature type="mutagenesis site" description="Loss of aggregation ability and defects in cAMP-mediated signaling pathways; when associated with D-444." evidence="6 7">
    <original>T</original>
    <variation>D</variation>
    <location>
        <position position="448"/>
    </location>
</feature>
<feature type="mutagenesis site" description="Constitutively sumoylated and cytosolic; when associated with E-444." evidence="6 7">
    <original>T</original>
    <variation>E</variation>
    <location>
        <position position="448"/>
    </location>
</feature>
<feature type="mutagenesis site" description="Temperature-sensitive mutant." evidence="7">
    <original>P</original>
    <variation>S</variation>
    <location>
        <position position="458"/>
    </location>
</feature>
<feature type="sequence conflict" description="In Ref. 1; AAB58577." evidence="10" ref="1">
    <original>E</original>
    <variation>D</variation>
    <location>
        <position position="471"/>
    </location>
</feature>